<reference key="1">
    <citation type="journal article" date="2006" name="J. Bacteriol.">
        <title>Complete genome sequence of Yersinia pestis strains Antiqua and Nepal516: evidence of gene reduction in an emerging pathogen.</title>
        <authorList>
            <person name="Chain P.S.G."/>
            <person name="Hu P."/>
            <person name="Malfatti S.A."/>
            <person name="Radnedge L."/>
            <person name="Larimer F."/>
            <person name="Vergez L.M."/>
            <person name="Worsham P."/>
            <person name="Chu M.C."/>
            <person name="Andersen G.L."/>
        </authorList>
    </citation>
    <scope>NUCLEOTIDE SEQUENCE [LARGE SCALE GENOMIC DNA]</scope>
    <source>
        <strain>Nepal516</strain>
    </source>
</reference>
<reference key="2">
    <citation type="submission" date="2009-04" db="EMBL/GenBank/DDBJ databases">
        <title>Yersinia pestis Nepal516A whole genome shotgun sequencing project.</title>
        <authorList>
            <person name="Plunkett G. III"/>
            <person name="Anderson B.D."/>
            <person name="Baumler D.J."/>
            <person name="Burland V."/>
            <person name="Cabot E.L."/>
            <person name="Glasner J.D."/>
            <person name="Mau B."/>
            <person name="Neeno-Eckwall E."/>
            <person name="Perna N.T."/>
            <person name="Munk A.C."/>
            <person name="Tapia R."/>
            <person name="Green L.D."/>
            <person name="Rogers Y.C."/>
            <person name="Detter J.C."/>
            <person name="Bruce D.C."/>
            <person name="Brettin T.S."/>
        </authorList>
    </citation>
    <scope>NUCLEOTIDE SEQUENCE [LARGE SCALE GENOMIC DNA]</scope>
    <source>
        <strain>Nepal516</strain>
    </source>
</reference>
<feature type="signal peptide" evidence="1">
    <location>
        <begin position="1"/>
        <end position="20"/>
    </location>
</feature>
<feature type="chain" id="PRO_5000115089" description="Chaperone SurA">
    <location>
        <begin position="21"/>
        <end position="434"/>
    </location>
</feature>
<feature type="domain" description="PpiC 1" evidence="1">
    <location>
        <begin position="171"/>
        <end position="272"/>
    </location>
</feature>
<feature type="domain" description="PpiC 2" evidence="1">
    <location>
        <begin position="282"/>
        <end position="382"/>
    </location>
</feature>
<keyword id="KW-0143">Chaperone</keyword>
<keyword id="KW-0413">Isomerase</keyword>
<keyword id="KW-0574">Periplasm</keyword>
<keyword id="KW-0677">Repeat</keyword>
<keyword id="KW-0697">Rotamase</keyword>
<keyword id="KW-0732">Signal</keyword>
<comment type="function">
    <text evidence="1">Chaperone involved in the correct folding and assembly of outer membrane proteins. Recognizes specific patterns of aromatic residues and the orientation of their side chains, which are found more frequently in integral outer membrane proteins. May act in both early periplasmic and late outer membrane-associated steps of protein maturation.</text>
</comment>
<comment type="catalytic activity">
    <reaction evidence="1">
        <text>[protein]-peptidylproline (omega=180) = [protein]-peptidylproline (omega=0)</text>
        <dbReference type="Rhea" id="RHEA:16237"/>
        <dbReference type="Rhea" id="RHEA-COMP:10747"/>
        <dbReference type="Rhea" id="RHEA-COMP:10748"/>
        <dbReference type="ChEBI" id="CHEBI:83833"/>
        <dbReference type="ChEBI" id="CHEBI:83834"/>
        <dbReference type="EC" id="5.2.1.8"/>
    </reaction>
</comment>
<comment type="subcellular location">
    <subcellularLocation>
        <location evidence="1">Periplasm</location>
    </subcellularLocation>
    <text evidence="1">Is capable of associating with the outer membrane.</text>
</comment>
<comment type="domain">
    <text evidence="1">The PPIase activity resides only in the second parvulin domain. The N-terminal region and the C-terminal tail are necessary and sufficient for the chaperone activity of SurA. The PPIase activity is dispensable for SurA to function as a chaperone. The N-terminal region and the C-terminal tail are also required for porin recognition.</text>
</comment>
<gene>
    <name evidence="1" type="primary">surA</name>
    <name type="ordered locus">YPN_0368</name>
    <name type="ORF">YP516_0376</name>
</gene>
<sequence>MKNWRTLILGLVICANTAFAAPQEVDKVAAVVDNGVVLQSDIDGLLQSVKMNAQQSGQQVPDDSTLRHQILERLIMDNIQLQMAKKMGITITDQALDKAIADIAAQNRMTLAQMRSRLAADGLSYDTYREQIRKEMLTSEVRNNEVRRRITILPQEVESLAKQMGNQVSGDTELNLSHILIPLPENPTQQQVDQAEDLANKLVADIKGGADFGKLAIANSADSQALKGGQMGWGKLQELPSLFAERLQSAHKGEIVGPIRSGVGFHILKVNDMRGADQTISVTEVNARHILLKPSPMMTDEQARAKLEAAAAEIKSGKTSFATIAKEISQDPGSAMQGGELGWASPDIYDPAFRDALMKLKKGEISAPVHSSFGWHLIQLVDTRQVDKTDAAQKERAYRMLFNRKFAEEAQTWMQEQRAAAYVKILDGSNAQPQ</sequence>
<organism>
    <name type="scientific">Yersinia pestis bv. Antiqua (strain Nepal516)</name>
    <dbReference type="NCBI Taxonomy" id="377628"/>
    <lineage>
        <taxon>Bacteria</taxon>
        <taxon>Pseudomonadati</taxon>
        <taxon>Pseudomonadota</taxon>
        <taxon>Gammaproteobacteria</taxon>
        <taxon>Enterobacterales</taxon>
        <taxon>Yersiniaceae</taxon>
        <taxon>Yersinia</taxon>
    </lineage>
</organism>
<dbReference type="EC" id="5.2.1.8" evidence="1"/>
<dbReference type="EMBL" id="CP000305">
    <property type="protein sequence ID" value="ABG16700.1"/>
    <property type="molecule type" value="Genomic_DNA"/>
</dbReference>
<dbReference type="EMBL" id="ACNQ01000006">
    <property type="protein sequence ID" value="EEO78152.1"/>
    <property type="molecule type" value="Genomic_DNA"/>
</dbReference>
<dbReference type="RefSeq" id="WP_002210488.1">
    <property type="nucleotide sequence ID" value="NZ_ACNQ01000006.1"/>
</dbReference>
<dbReference type="SMR" id="Q1CMT0"/>
<dbReference type="GeneID" id="57974116"/>
<dbReference type="KEGG" id="ypn:YPN_0368"/>
<dbReference type="HOGENOM" id="CLU_034646_11_0_6"/>
<dbReference type="Proteomes" id="UP000008936">
    <property type="component" value="Chromosome"/>
</dbReference>
<dbReference type="GO" id="GO:0030288">
    <property type="term" value="C:outer membrane-bounded periplasmic space"/>
    <property type="evidence" value="ECO:0007669"/>
    <property type="project" value="InterPro"/>
</dbReference>
<dbReference type="GO" id="GO:0042277">
    <property type="term" value="F:peptide binding"/>
    <property type="evidence" value="ECO:0007669"/>
    <property type="project" value="InterPro"/>
</dbReference>
<dbReference type="GO" id="GO:0003755">
    <property type="term" value="F:peptidyl-prolyl cis-trans isomerase activity"/>
    <property type="evidence" value="ECO:0007669"/>
    <property type="project" value="UniProtKB-UniRule"/>
</dbReference>
<dbReference type="GO" id="GO:0051082">
    <property type="term" value="F:unfolded protein binding"/>
    <property type="evidence" value="ECO:0007669"/>
    <property type="project" value="UniProtKB-UniRule"/>
</dbReference>
<dbReference type="GO" id="GO:0043165">
    <property type="term" value="P:Gram-negative-bacterium-type cell outer membrane assembly"/>
    <property type="evidence" value="ECO:0007669"/>
    <property type="project" value="InterPro"/>
</dbReference>
<dbReference type="GO" id="GO:0006457">
    <property type="term" value="P:protein folding"/>
    <property type="evidence" value="ECO:0007669"/>
    <property type="project" value="UniProtKB-UniRule"/>
</dbReference>
<dbReference type="GO" id="GO:0050821">
    <property type="term" value="P:protein stabilization"/>
    <property type="evidence" value="ECO:0007669"/>
    <property type="project" value="InterPro"/>
</dbReference>
<dbReference type="Gene3D" id="3.10.50.40">
    <property type="match status" value="2"/>
</dbReference>
<dbReference type="Gene3D" id="1.10.4030.10">
    <property type="entry name" value="Porin chaperone SurA, peptide-binding domain"/>
    <property type="match status" value="2"/>
</dbReference>
<dbReference type="HAMAP" id="MF_01183">
    <property type="entry name" value="Chaperone_SurA"/>
    <property type="match status" value="1"/>
</dbReference>
<dbReference type="InterPro" id="IPR050280">
    <property type="entry name" value="OMP_Chaperone_SurA"/>
</dbReference>
<dbReference type="InterPro" id="IPR046357">
    <property type="entry name" value="PPIase_dom_sf"/>
</dbReference>
<dbReference type="InterPro" id="IPR000297">
    <property type="entry name" value="PPIase_PpiC"/>
</dbReference>
<dbReference type="InterPro" id="IPR023034">
    <property type="entry name" value="PPIase_SurA"/>
</dbReference>
<dbReference type="InterPro" id="IPR015391">
    <property type="entry name" value="SurA_N"/>
</dbReference>
<dbReference type="InterPro" id="IPR027304">
    <property type="entry name" value="Trigger_fact/SurA_dom_sf"/>
</dbReference>
<dbReference type="NCBIfam" id="NF008038">
    <property type="entry name" value="PRK10770.1"/>
    <property type="match status" value="1"/>
</dbReference>
<dbReference type="PANTHER" id="PTHR47637">
    <property type="entry name" value="CHAPERONE SURA"/>
    <property type="match status" value="1"/>
</dbReference>
<dbReference type="PANTHER" id="PTHR47637:SF1">
    <property type="entry name" value="CHAPERONE SURA"/>
    <property type="match status" value="1"/>
</dbReference>
<dbReference type="Pfam" id="PF00639">
    <property type="entry name" value="Rotamase"/>
    <property type="match status" value="1"/>
</dbReference>
<dbReference type="Pfam" id="PF13616">
    <property type="entry name" value="Rotamase_3"/>
    <property type="match status" value="1"/>
</dbReference>
<dbReference type="Pfam" id="PF09312">
    <property type="entry name" value="SurA_N"/>
    <property type="match status" value="1"/>
</dbReference>
<dbReference type="SUPFAM" id="SSF54534">
    <property type="entry name" value="FKBP-like"/>
    <property type="match status" value="2"/>
</dbReference>
<dbReference type="SUPFAM" id="SSF109998">
    <property type="entry name" value="Triger factor/SurA peptide-binding domain-like"/>
    <property type="match status" value="1"/>
</dbReference>
<dbReference type="PROSITE" id="PS01096">
    <property type="entry name" value="PPIC_PPIASE_1"/>
    <property type="match status" value="1"/>
</dbReference>
<dbReference type="PROSITE" id="PS50198">
    <property type="entry name" value="PPIC_PPIASE_2"/>
    <property type="match status" value="2"/>
</dbReference>
<name>SURA_YERPN</name>
<evidence type="ECO:0000255" key="1">
    <source>
        <dbReference type="HAMAP-Rule" id="MF_01183"/>
    </source>
</evidence>
<accession>Q1CMT0</accession>
<accession>C4GNS0</accession>
<proteinExistence type="inferred from homology"/>
<protein>
    <recommendedName>
        <fullName evidence="1">Chaperone SurA</fullName>
    </recommendedName>
    <alternativeName>
        <fullName evidence="1">Peptidyl-prolyl cis-trans isomerase SurA</fullName>
        <shortName evidence="1">PPIase SurA</shortName>
        <ecNumber evidence="1">5.2.1.8</ecNumber>
    </alternativeName>
    <alternativeName>
        <fullName evidence="1">Rotamase SurA</fullName>
    </alternativeName>
</protein>